<sequence length="444" mass="50816">MEKLLSLYQEHIKTLQNRTRDALSRHHLDNVLIHSGEPIGVFLDDSDYPFKVNAHFKAWVPVTDVPHCWLLVDGVNKPKFWFYSPVDYWHSVEALPSSYWTHEIELIHLKNVDDIQKELAPFINKNTAYIGPNTQRADSLGVSLDNVNNQSLLNYYHYYRAYKTGYELACMREAQKMAVNGHIAAREAFQAELSEFDINMAYLMATGHRDTDVPYGNIVALNEHAAVLHYTKLDHQSPDEYRSFLIDAGAEYNGYAADITRTYSAKENHEFTALVKDMNDAQQALIATMKAGVRYSEYHIQMHQRIAGLLHKYGIVKGISEEEMVSEGLTTPFLPHGLGHALGLQVHDAGGFMQDDKGTHLAAPAMYPFLRCTRIVEPGMVLTIEPGFYFIDSLLAPWREGKYRSHFDWHLIEHFKPFGGIRIEDNIIIHDNKIENMTRDLHLA</sequence>
<protein>
    <recommendedName>
        <fullName evidence="1">Xaa-Pro dipeptidase</fullName>
        <shortName evidence="1">X-Pro dipeptidase</shortName>
        <ecNumber evidence="1">3.4.13.9</ecNumber>
    </recommendedName>
    <alternativeName>
        <fullName evidence="1">Imidodipeptidase</fullName>
    </alternativeName>
    <alternativeName>
        <fullName evidence="1">Proline dipeptidase</fullName>
        <shortName evidence="1">Prolidase</shortName>
    </alternativeName>
</protein>
<dbReference type="EC" id="3.4.13.9" evidence="1"/>
<dbReference type="EMBL" id="AM942759">
    <property type="protein sequence ID" value="CAR46958.1"/>
    <property type="molecule type" value="Genomic_DNA"/>
</dbReference>
<dbReference type="RefSeq" id="WP_012368794.1">
    <property type="nucleotide sequence ID" value="NC_010554.1"/>
</dbReference>
<dbReference type="SMR" id="B4EWE3"/>
<dbReference type="MEROPS" id="M24.003"/>
<dbReference type="EnsemblBacteria" id="CAR46958">
    <property type="protein sequence ID" value="CAR46958"/>
    <property type="gene ID" value="PMI3551"/>
</dbReference>
<dbReference type="GeneID" id="6801840"/>
<dbReference type="KEGG" id="pmr:PMI3551"/>
<dbReference type="PATRIC" id="fig|529507.6.peg.3471"/>
<dbReference type="eggNOG" id="COG0006">
    <property type="taxonomic scope" value="Bacteria"/>
</dbReference>
<dbReference type="HOGENOM" id="CLU_050675_0_0_6"/>
<dbReference type="Proteomes" id="UP000008319">
    <property type="component" value="Chromosome"/>
</dbReference>
<dbReference type="GO" id="GO:0005829">
    <property type="term" value="C:cytosol"/>
    <property type="evidence" value="ECO:0007669"/>
    <property type="project" value="TreeGrafter"/>
</dbReference>
<dbReference type="GO" id="GO:0004177">
    <property type="term" value="F:aminopeptidase activity"/>
    <property type="evidence" value="ECO:0007669"/>
    <property type="project" value="TreeGrafter"/>
</dbReference>
<dbReference type="GO" id="GO:0046872">
    <property type="term" value="F:metal ion binding"/>
    <property type="evidence" value="ECO:0007669"/>
    <property type="project" value="UniProtKB-KW"/>
</dbReference>
<dbReference type="GO" id="GO:0008235">
    <property type="term" value="F:metalloexopeptidase activity"/>
    <property type="evidence" value="ECO:0007669"/>
    <property type="project" value="UniProtKB-UniRule"/>
</dbReference>
<dbReference type="GO" id="GO:0016795">
    <property type="term" value="F:phosphoric triester hydrolase activity"/>
    <property type="evidence" value="ECO:0007669"/>
    <property type="project" value="InterPro"/>
</dbReference>
<dbReference type="GO" id="GO:0102009">
    <property type="term" value="F:proline dipeptidase activity"/>
    <property type="evidence" value="ECO:0007669"/>
    <property type="project" value="UniProtKB-EC"/>
</dbReference>
<dbReference type="GO" id="GO:0006508">
    <property type="term" value="P:proteolysis"/>
    <property type="evidence" value="ECO:0007669"/>
    <property type="project" value="UniProtKB-KW"/>
</dbReference>
<dbReference type="CDD" id="cd01087">
    <property type="entry name" value="Prolidase"/>
    <property type="match status" value="1"/>
</dbReference>
<dbReference type="Gene3D" id="3.90.230.10">
    <property type="entry name" value="Creatinase/methionine aminopeptidase superfamily"/>
    <property type="match status" value="1"/>
</dbReference>
<dbReference type="Gene3D" id="3.40.350.10">
    <property type="entry name" value="Creatinase/prolidase N-terminal domain"/>
    <property type="match status" value="1"/>
</dbReference>
<dbReference type="HAMAP" id="MF_01279">
    <property type="entry name" value="X_Pro_dipeptid"/>
    <property type="match status" value="1"/>
</dbReference>
<dbReference type="InterPro" id="IPR029149">
    <property type="entry name" value="Creatin/AminoP/Spt16_N"/>
</dbReference>
<dbReference type="InterPro" id="IPR036005">
    <property type="entry name" value="Creatinase/aminopeptidase-like"/>
</dbReference>
<dbReference type="InterPro" id="IPR048819">
    <property type="entry name" value="PepQ_N"/>
</dbReference>
<dbReference type="InterPro" id="IPR000994">
    <property type="entry name" value="Pept_M24"/>
</dbReference>
<dbReference type="InterPro" id="IPR001131">
    <property type="entry name" value="Peptidase_M24B_aminopep-P_CS"/>
</dbReference>
<dbReference type="InterPro" id="IPR052433">
    <property type="entry name" value="X-Pro_dipept-like"/>
</dbReference>
<dbReference type="InterPro" id="IPR022846">
    <property type="entry name" value="X_Pro_dipept"/>
</dbReference>
<dbReference type="NCBIfam" id="NF010133">
    <property type="entry name" value="PRK13607.1"/>
    <property type="match status" value="1"/>
</dbReference>
<dbReference type="PANTHER" id="PTHR43226">
    <property type="entry name" value="XAA-PRO AMINOPEPTIDASE 3"/>
    <property type="match status" value="1"/>
</dbReference>
<dbReference type="PANTHER" id="PTHR43226:SF8">
    <property type="entry name" value="XAA-PRO DIPEPTIDASE"/>
    <property type="match status" value="1"/>
</dbReference>
<dbReference type="Pfam" id="PF21216">
    <property type="entry name" value="PepQ_N"/>
    <property type="match status" value="1"/>
</dbReference>
<dbReference type="Pfam" id="PF00557">
    <property type="entry name" value="Peptidase_M24"/>
    <property type="match status" value="1"/>
</dbReference>
<dbReference type="SUPFAM" id="SSF55920">
    <property type="entry name" value="Creatinase/aminopeptidase"/>
    <property type="match status" value="1"/>
</dbReference>
<dbReference type="PROSITE" id="PS00491">
    <property type="entry name" value="PROLINE_PEPTIDASE"/>
    <property type="match status" value="1"/>
</dbReference>
<organism>
    <name type="scientific">Proteus mirabilis (strain HI4320)</name>
    <dbReference type="NCBI Taxonomy" id="529507"/>
    <lineage>
        <taxon>Bacteria</taxon>
        <taxon>Pseudomonadati</taxon>
        <taxon>Pseudomonadota</taxon>
        <taxon>Gammaproteobacteria</taxon>
        <taxon>Enterobacterales</taxon>
        <taxon>Morganellaceae</taxon>
        <taxon>Proteus</taxon>
    </lineage>
</organism>
<feature type="chain" id="PRO_1000140322" description="Xaa-Pro dipeptidase">
    <location>
        <begin position="1"/>
        <end position="444"/>
    </location>
</feature>
<feature type="binding site" evidence="1">
    <location>
        <position position="247"/>
    </location>
    <ligand>
        <name>Mn(2+)</name>
        <dbReference type="ChEBI" id="CHEBI:29035"/>
        <label>2</label>
    </ligand>
</feature>
<feature type="binding site" evidence="1">
    <location>
        <position position="258"/>
    </location>
    <ligand>
        <name>Mn(2+)</name>
        <dbReference type="ChEBI" id="CHEBI:29035"/>
        <label>1</label>
    </ligand>
</feature>
<feature type="binding site" evidence="1">
    <location>
        <position position="258"/>
    </location>
    <ligand>
        <name>Mn(2+)</name>
        <dbReference type="ChEBI" id="CHEBI:29035"/>
        <label>2</label>
    </ligand>
</feature>
<feature type="binding site" evidence="1">
    <location>
        <position position="340"/>
    </location>
    <ligand>
        <name>Mn(2+)</name>
        <dbReference type="ChEBI" id="CHEBI:29035"/>
        <label>1</label>
    </ligand>
</feature>
<feature type="binding site" evidence="1">
    <location>
        <position position="385"/>
    </location>
    <ligand>
        <name>Mn(2+)</name>
        <dbReference type="ChEBI" id="CHEBI:29035"/>
        <label>1</label>
    </ligand>
</feature>
<feature type="binding site" evidence="1">
    <location>
        <position position="424"/>
    </location>
    <ligand>
        <name>Mn(2+)</name>
        <dbReference type="ChEBI" id="CHEBI:29035"/>
        <label>1</label>
    </ligand>
</feature>
<feature type="binding site" evidence="1">
    <location>
        <position position="424"/>
    </location>
    <ligand>
        <name>Mn(2+)</name>
        <dbReference type="ChEBI" id="CHEBI:29035"/>
        <label>2</label>
    </ligand>
</feature>
<gene>
    <name evidence="1" type="primary">pepQ</name>
    <name type="ordered locus">PMI3551</name>
</gene>
<evidence type="ECO:0000255" key="1">
    <source>
        <dbReference type="HAMAP-Rule" id="MF_01279"/>
    </source>
</evidence>
<keyword id="KW-0224">Dipeptidase</keyword>
<keyword id="KW-0378">Hydrolase</keyword>
<keyword id="KW-0464">Manganese</keyword>
<keyword id="KW-0479">Metal-binding</keyword>
<keyword id="KW-0482">Metalloprotease</keyword>
<keyword id="KW-0645">Protease</keyword>
<keyword id="KW-1185">Reference proteome</keyword>
<accession>B4EWE3</accession>
<comment type="function">
    <text evidence="1">Splits dipeptides with a prolyl residue in the C-terminal position.</text>
</comment>
<comment type="catalytic activity">
    <reaction evidence="1">
        <text>Xaa-L-Pro dipeptide + H2O = an L-alpha-amino acid + L-proline</text>
        <dbReference type="Rhea" id="RHEA:76407"/>
        <dbReference type="ChEBI" id="CHEBI:15377"/>
        <dbReference type="ChEBI" id="CHEBI:59869"/>
        <dbReference type="ChEBI" id="CHEBI:60039"/>
        <dbReference type="ChEBI" id="CHEBI:195196"/>
        <dbReference type="EC" id="3.4.13.9"/>
    </reaction>
</comment>
<comment type="cofactor">
    <cofactor evidence="1">
        <name>Mn(2+)</name>
        <dbReference type="ChEBI" id="CHEBI:29035"/>
    </cofactor>
    <text evidence="1">Binds 2 manganese ions per subunit.</text>
</comment>
<comment type="similarity">
    <text evidence="1">Belongs to the peptidase M24B family. Bacterial-type prolidase subfamily.</text>
</comment>
<name>PEPQ_PROMH</name>
<reference key="1">
    <citation type="journal article" date="2008" name="J. Bacteriol.">
        <title>Complete genome sequence of uropathogenic Proteus mirabilis, a master of both adherence and motility.</title>
        <authorList>
            <person name="Pearson M.M."/>
            <person name="Sebaihia M."/>
            <person name="Churcher C."/>
            <person name="Quail M.A."/>
            <person name="Seshasayee A.S."/>
            <person name="Luscombe N.M."/>
            <person name="Abdellah Z."/>
            <person name="Arrosmith C."/>
            <person name="Atkin B."/>
            <person name="Chillingworth T."/>
            <person name="Hauser H."/>
            <person name="Jagels K."/>
            <person name="Moule S."/>
            <person name="Mungall K."/>
            <person name="Norbertczak H."/>
            <person name="Rabbinowitsch E."/>
            <person name="Walker D."/>
            <person name="Whithead S."/>
            <person name="Thomson N.R."/>
            <person name="Rather P.N."/>
            <person name="Parkhill J."/>
            <person name="Mobley H.L.T."/>
        </authorList>
    </citation>
    <scope>NUCLEOTIDE SEQUENCE [LARGE SCALE GENOMIC DNA]</scope>
    <source>
        <strain>HI4320</strain>
    </source>
</reference>
<proteinExistence type="inferred from homology"/>